<reference key="1">
    <citation type="journal article" date="1985" name="Infect. Immun.">
        <title>Nucleotide sequences of four variants of the K88 gene of porcine enterotoxigenic Escherichia coli.</title>
        <authorList>
            <person name="Dykes C.W."/>
            <person name="Halliday I.J."/>
            <person name="Read M.J."/>
            <person name="Hobden A.N."/>
            <person name="Harford S."/>
        </authorList>
    </citation>
    <scope>NUCLEOTIDE SEQUENCE [GENOMIC DNA]</scope>
</reference>
<reference key="2">
    <citation type="journal article" date="1984" name="FEMS Microbiol. Lett.">
        <title>The nucleotide sequence of the protein subunit of the K88ac fimbriae of porcine enterotoxigenic Escherichia coli.</title>
        <authorList>
            <person name="Josephsen J."/>
            <person name="Hansen F."/>
            <person name="de Graaf F.K."/>
            <person name="Gaastra W."/>
        </authorList>
        <dbReference type="AGRICOLA" id="IND85004943"/>
    </citation>
    <scope>NUCLEOTIDE SEQUENCE [GENOMIC DNA]</scope>
</reference>
<reference key="3">
    <citation type="journal article" date="1989" name="Appl. Environ. Microbiol.">
        <title>Cloning of DNA sequences encoding foreign peptides and their expression in the K88 pili.</title>
        <authorList>
            <person name="Thiry G."/>
            <person name="Clippe A."/>
            <person name="Scarcez T."/>
            <person name="Petre J."/>
        </authorList>
    </citation>
    <scope>NUCLEOTIDE SEQUENCE [GENOMIC DNA]</scope>
</reference>
<accession>P14190</accession>
<dbReference type="EMBL" id="M29375">
    <property type="protein sequence ID" value="AAA24033.1"/>
    <property type="molecule type" value="Genomic_DNA"/>
</dbReference>
<dbReference type="EMBL" id="M35954">
    <property type="protein sequence ID" value="AAA24034.1"/>
    <property type="molecule type" value="Genomic_DNA"/>
</dbReference>
<dbReference type="EMBL" id="M25302">
    <property type="protein sequence ID" value="AAA24390.1"/>
    <property type="molecule type" value="Genomic_DNA"/>
</dbReference>
<dbReference type="EMBL" id="A02560">
    <property type="protein sequence ID" value="CAA00254.1"/>
    <property type="molecule type" value="Unassigned_DNA"/>
</dbReference>
<dbReference type="PIR" id="I41318">
    <property type="entry name" value="I41318"/>
</dbReference>
<dbReference type="RefSeq" id="WP_063096999.1">
    <property type="nucleotide sequence ID" value="NZ_CAJHJK010000001.1"/>
</dbReference>
<dbReference type="PDB" id="2J6R">
    <property type="method" value="X-ray"/>
    <property type="resolution" value="1.90 A"/>
    <property type="chains" value="A/B=22-283"/>
</dbReference>
<dbReference type="PDB" id="4WEM">
    <property type="method" value="X-ray"/>
    <property type="resolution" value="1.55 A"/>
    <property type="chains" value="A=40-283"/>
</dbReference>
<dbReference type="PDB" id="4WEN">
    <property type="method" value="X-ray"/>
    <property type="resolution" value="1.89 A"/>
    <property type="chains" value="A=40-283"/>
</dbReference>
<dbReference type="PDBsum" id="2J6R"/>
<dbReference type="PDBsum" id="4WEM"/>
<dbReference type="PDBsum" id="4WEN"/>
<dbReference type="SMR" id="P14190"/>
<dbReference type="ABCD" id="P14190">
    <property type="antibodies" value="9 sequenced antibodies"/>
</dbReference>
<dbReference type="EvolutionaryTrace" id="P14190"/>
<dbReference type="GO" id="GO:0009289">
    <property type="term" value="C:pilus"/>
    <property type="evidence" value="ECO:0007669"/>
    <property type="project" value="UniProtKB-SubCell"/>
</dbReference>
<dbReference type="GO" id="GO:0007155">
    <property type="term" value="P:cell adhesion"/>
    <property type="evidence" value="ECO:0007669"/>
    <property type="project" value="InterPro"/>
</dbReference>
<dbReference type="InterPro" id="IPR003467">
    <property type="entry name" value="Fimbrial_K88_FaeH"/>
</dbReference>
<dbReference type="Pfam" id="PF02432">
    <property type="entry name" value="Fimbrial_K88"/>
    <property type="match status" value="1"/>
</dbReference>
<feature type="signal peptide">
    <location>
        <begin position="1"/>
        <end position="21"/>
    </location>
</feature>
<feature type="chain" id="PRO_0000009195" description="K88 fimbrial protein AC">
    <location>
        <begin position="22"/>
        <end position="283"/>
    </location>
</feature>
<feature type="sequence conflict" description="In Ref. 2; AAA24034." evidence="1" ref="2">
    <original>S</original>
    <variation>A</variation>
    <location>
        <position position="178"/>
    </location>
</feature>
<feature type="sequence conflict" description="In Ref. 2; AAA24034." evidence="1" ref="2">
    <original>L</original>
    <variation>S</variation>
    <location>
        <position position="190"/>
    </location>
</feature>
<feature type="strand" evidence="2">
    <location>
        <begin position="23"/>
        <end position="26"/>
    </location>
</feature>
<feature type="strand" evidence="2">
    <location>
        <begin position="28"/>
        <end position="31"/>
    </location>
</feature>
<feature type="strand" evidence="2">
    <location>
        <begin position="33"/>
        <end position="38"/>
    </location>
</feature>
<feature type="strand" evidence="3">
    <location>
        <begin position="46"/>
        <end position="51"/>
    </location>
</feature>
<feature type="strand" evidence="3">
    <location>
        <begin position="57"/>
        <end position="60"/>
    </location>
</feature>
<feature type="helix" evidence="3">
    <location>
        <begin position="61"/>
        <end position="63"/>
    </location>
</feature>
<feature type="turn" evidence="3">
    <location>
        <begin position="66"/>
        <end position="69"/>
    </location>
</feature>
<feature type="strand" evidence="3">
    <location>
        <begin position="70"/>
        <end position="74"/>
    </location>
</feature>
<feature type="strand" evidence="3">
    <location>
        <begin position="79"/>
        <end position="88"/>
    </location>
</feature>
<feature type="strand" evidence="2">
    <location>
        <begin position="94"/>
        <end position="98"/>
    </location>
</feature>
<feature type="strand" evidence="3">
    <location>
        <begin position="101"/>
        <end position="107"/>
    </location>
</feature>
<feature type="strand" evidence="3">
    <location>
        <begin position="128"/>
        <end position="136"/>
    </location>
</feature>
<feature type="strand" evidence="3">
    <location>
        <begin position="142"/>
        <end position="159"/>
    </location>
</feature>
<feature type="strand" evidence="3">
    <location>
        <begin position="164"/>
        <end position="171"/>
    </location>
</feature>
<feature type="strand" evidence="3">
    <location>
        <begin position="186"/>
        <end position="188"/>
    </location>
</feature>
<feature type="helix" evidence="3">
    <location>
        <begin position="193"/>
        <end position="203"/>
    </location>
</feature>
<feature type="helix" evidence="3">
    <location>
        <begin position="208"/>
        <end position="216"/>
    </location>
</feature>
<feature type="strand" evidence="3">
    <location>
        <begin position="224"/>
        <end position="227"/>
    </location>
</feature>
<feature type="strand" evidence="3">
    <location>
        <begin position="239"/>
        <end position="241"/>
    </location>
</feature>
<feature type="strand" evidence="3">
    <location>
        <begin position="243"/>
        <end position="252"/>
    </location>
</feature>
<feature type="strand" evidence="3">
    <location>
        <begin position="257"/>
        <end position="264"/>
    </location>
</feature>
<feature type="strand" evidence="3">
    <location>
        <begin position="270"/>
        <end position="273"/>
    </location>
</feature>
<feature type="strand" evidence="3">
    <location>
        <begin position="276"/>
        <end position="282"/>
    </location>
</feature>
<geneLocation type="plasmid">
    <name>pFM205</name>
</geneLocation>
<organism>
    <name type="scientific">Escherichia coli</name>
    <dbReference type="NCBI Taxonomy" id="562"/>
    <lineage>
        <taxon>Bacteria</taxon>
        <taxon>Pseudomonadati</taxon>
        <taxon>Pseudomonadota</taxon>
        <taxon>Gammaproteobacteria</taxon>
        <taxon>Enterobacterales</taxon>
        <taxon>Enterobacteriaceae</taxon>
        <taxon>Escherichia</taxon>
    </lineage>
</organism>
<gene>
    <name type="primary">faeG</name>
</gene>
<protein>
    <recommendedName>
        <fullName>K88 fimbrial protein AC</fullName>
    </recommendedName>
    <alternativeName>
        <fullName>K88 antigen</fullName>
    </alternativeName>
    <alternativeName>
        <fullName>K88 pilin</fullName>
    </alternativeName>
</protein>
<comment type="function">
    <text>K88 major fimbrial subunit. Fimbriae (also called pili), are polar filaments radiating from the surface of the bacterium to a length of 0.5-1.5 micrometers and numbering 100-300 per cell. They enable bacteria to colonize the epithelium of specific host organs.</text>
</comment>
<comment type="subunit">
    <text>K88 fimbria, 0.1-1 micrometer in length and 7 nanometers in diameter, is composed of about 100 identical subunits.</text>
</comment>
<comment type="subcellular location">
    <subcellularLocation>
        <location>Fimbrium</location>
    </subcellularLocation>
</comment>
<comment type="miscellaneous">
    <text>The protein exists in several antigenic variants.</text>
</comment>
<comment type="similarity">
    <text evidence="1">Belongs to the fimbrial K88 protein family.</text>
</comment>
<proteinExistence type="evidence at protein level"/>
<name>FAEG2_ECOLX</name>
<keyword id="KW-0002">3D-structure</keyword>
<keyword id="KW-0281">Fimbrium</keyword>
<keyword id="KW-0614">Plasmid</keyword>
<keyword id="KW-0732">Signal</keyword>
<sequence>MKKTLIALAIAASAASGMAHAWMTGDFNGSVDIGGSITADDYRQKWEWKVGTGLNGFGNVLNDLTNGGTKLTITVTGNKPILLGRTKEAFATPVTGGVDGIPHIAFTDYEGASVVLRNPDGETNKKGLAYFVLPMKNAEGTKVGSVKVNASYAGVLGRGGVTSADGELLSLFADGLSSIFYGGLPRGSELSAGSAAAARTKLFGSLSRNDILGQIQRVNANITSLVDVAGSYRENMEYTDGTVVSAAYALGIANGQTIEATFNQAVTTSTQWSAPLNVAITYY</sequence>
<evidence type="ECO:0000305" key="1"/>
<evidence type="ECO:0007829" key="2">
    <source>
        <dbReference type="PDB" id="2J6R"/>
    </source>
</evidence>
<evidence type="ECO:0007829" key="3">
    <source>
        <dbReference type="PDB" id="4WEM"/>
    </source>
</evidence>